<dbReference type="EMBL" id="AE009951">
    <property type="protein sequence ID" value="AAL94930.1"/>
    <property type="molecule type" value="Genomic_DNA"/>
</dbReference>
<dbReference type="RefSeq" id="NP_603631.1">
    <property type="nucleotide sequence ID" value="NC_003454.1"/>
</dbReference>
<dbReference type="RefSeq" id="WP_011016615.1">
    <property type="nucleotide sequence ID" value="NZ_CP028101.1"/>
</dbReference>
<dbReference type="STRING" id="190304.FN0734"/>
<dbReference type="PaxDb" id="190304-FN0734"/>
<dbReference type="EnsemblBacteria" id="AAL94930">
    <property type="protein sequence ID" value="AAL94930"/>
    <property type="gene ID" value="FN0734"/>
</dbReference>
<dbReference type="GeneID" id="79783727"/>
<dbReference type="KEGG" id="fnu:FN0734"/>
<dbReference type="PATRIC" id="fig|190304.8.peg.1297"/>
<dbReference type="eggNOG" id="COG1032">
    <property type="taxonomic scope" value="Bacteria"/>
</dbReference>
<dbReference type="HOGENOM" id="CLU_018288_2_0_0"/>
<dbReference type="InParanoid" id="Q8R682"/>
<dbReference type="BioCyc" id="FNUC190304:G1FZS-1320-MONOMER"/>
<dbReference type="Proteomes" id="UP000002521">
    <property type="component" value="Chromosome"/>
</dbReference>
<dbReference type="GO" id="GO:0051539">
    <property type="term" value="F:4 iron, 4 sulfur cluster binding"/>
    <property type="evidence" value="ECO:0007669"/>
    <property type="project" value="UniProtKB-KW"/>
</dbReference>
<dbReference type="GO" id="GO:0003824">
    <property type="term" value="F:catalytic activity"/>
    <property type="evidence" value="ECO:0007669"/>
    <property type="project" value="InterPro"/>
</dbReference>
<dbReference type="GO" id="GO:0005506">
    <property type="term" value="F:iron ion binding"/>
    <property type="evidence" value="ECO:0007669"/>
    <property type="project" value="UniProtKB-UniRule"/>
</dbReference>
<dbReference type="Gene3D" id="3.80.30.20">
    <property type="entry name" value="tm_1862 like domain"/>
    <property type="match status" value="1"/>
</dbReference>
<dbReference type="HAMAP" id="MF_01251">
    <property type="entry name" value="UPF0313"/>
    <property type="match status" value="1"/>
</dbReference>
<dbReference type="InterPro" id="IPR006638">
    <property type="entry name" value="Elp3/MiaA/NifB-like_rSAM"/>
</dbReference>
<dbReference type="InterPro" id="IPR020612">
    <property type="entry name" value="Methylthiotransferase_CS"/>
</dbReference>
<dbReference type="InterPro" id="IPR007197">
    <property type="entry name" value="rSAM"/>
</dbReference>
<dbReference type="InterPro" id="IPR023404">
    <property type="entry name" value="rSAM_horseshoe"/>
</dbReference>
<dbReference type="InterPro" id="IPR022946">
    <property type="entry name" value="UPF0313"/>
</dbReference>
<dbReference type="InterPro" id="IPR013704">
    <property type="entry name" value="UPF0313_N"/>
</dbReference>
<dbReference type="NCBIfam" id="TIGR03904">
    <property type="entry name" value="SAM_YgiQ"/>
    <property type="match status" value="1"/>
</dbReference>
<dbReference type="PANTHER" id="PTHR32331">
    <property type="entry name" value="UPF0313 PROTEIN YGIQ"/>
    <property type="match status" value="1"/>
</dbReference>
<dbReference type="PANTHER" id="PTHR32331:SF0">
    <property type="entry name" value="UPF0313 PROTEIN YGIQ"/>
    <property type="match status" value="1"/>
</dbReference>
<dbReference type="Pfam" id="PF08497">
    <property type="entry name" value="Radical_SAM_N"/>
    <property type="match status" value="1"/>
</dbReference>
<dbReference type="SFLD" id="SFLDS00029">
    <property type="entry name" value="Radical_SAM"/>
    <property type="match status" value="1"/>
</dbReference>
<dbReference type="SFLD" id="SFLDG01069">
    <property type="entry name" value="UPF0313"/>
    <property type="match status" value="1"/>
</dbReference>
<dbReference type="SMART" id="SM00729">
    <property type="entry name" value="Elp3"/>
    <property type="match status" value="1"/>
</dbReference>
<dbReference type="SUPFAM" id="SSF102114">
    <property type="entry name" value="Radical SAM enzymes"/>
    <property type="match status" value="1"/>
</dbReference>
<dbReference type="PROSITE" id="PS51918">
    <property type="entry name" value="RADICAL_SAM"/>
    <property type="match status" value="1"/>
</dbReference>
<organism>
    <name type="scientific">Fusobacterium nucleatum subsp. nucleatum (strain ATCC 25586 / DSM 15643 / BCRC 10681 / CIP 101130 / JCM 8532 / KCTC 2640 / LMG 13131 / VPI 4355)</name>
    <dbReference type="NCBI Taxonomy" id="190304"/>
    <lineage>
        <taxon>Bacteria</taxon>
        <taxon>Fusobacteriati</taxon>
        <taxon>Fusobacteriota</taxon>
        <taxon>Fusobacteriia</taxon>
        <taxon>Fusobacteriales</taxon>
        <taxon>Fusobacteriaceae</taxon>
        <taxon>Fusobacterium</taxon>
    </lineage>
</organism>
<reference key="1">
    <citation type="journal article" date="2002" name="J. Bacteriol.">
        <title>Genome sequence and analysis of the oral bacterium Fusobacterium nucleatum strain ATCC 25586.</title>
        <authorList>
            <person name="Kapatral V."/>
            <person name="Anderson I."/>
            <person name="Ivanova N."/>
            <person name="Reznik G."/>
            <person name="Los T."/>
            <person name="Lykidis A."/>
            <person name="Bhattacharyya A."/>
            <person name="Bartman A."/>
            <person name="Gardner W."/>
            <person name="Grechkin G."/>
            <person name="Zhu L."/>
            <person name="Vasieva O."/>
            <person name="Chu L."/>
            <person name="Kogan Y."/>
            <person name="Chaga O."/>
            <person name="Goltsman E."/>
            <person name="Bernal A."/>
            <person name="Larsen N."/>
            <person name="D'Souza M."/>
            <person name="Walunas T."/>
            <person name="Pusch G."/>
            <person name="Haselkorn R."/>
            <person name="Fonstein M."/>
            <person name="Kyrpides N.C."/>
            <person name="Overbeek R."/>
        </authorList>
    </citation>
    <scope>NUCLEOTIDE SEQUENCE [LARGE SCALE GENOMIC DNA]</scope>
    <source>
        <strain>ATCC 25586 / DSM 15643 / BCRC 10681 / CIP 101130 / JCM 8532 / KCTC 2640 / LMG 13131 / VPI 4355</strain>
    </source>
</reference>
<comment type="cofactor">
    <cofactor evidence="1">
        <name>[4Fe-4S] cluster</name>
        <dbReference type="ChEBI" id="CHEBI:49883"/>
    </cofactor>
    <text evidence="1">Binds 1 [4Fe-4S] cluster. The cluster is coordinated with 3 cysteines and an exchangeable S-adenosyl-L-methionine.</text>
</comment>
<comment type="similarity">
    <text evidence="1">Belongs to the UPF0313 family.</text>
</comment>
<evidence type="ECO:0000255" key="1">
    <source>
        <dbReference type="HAMAP-Rule" id="MF_01251"/>
    </source>
</evidence>
<evidence type="ECO:0000255" key="2">
    <source>
        <dbReference type="PROSITE-ProRule" id="PRU01266"/>
    </source>
</evidence>
<evidence type="ECO:0000256" key="3">
    <source>
        <dbReference type="SAM" id="MobiDB-lite"/>
    </source>
</evidence>
<feature type="chain" id="PRO_0000076386" description="UPF0313 protein FN0734">
    <location>
        <begin position="1"/>
        <end position="568"/>
    </location>
</feature>
<feature type="domain" description="Radical SAM core" evidence="2">
    <location>
        <begin position="289"/>
        <end position="562"/>
    </location>
</feature>
<feature type="region of interest" description="Disordered" evidence="3">
    <location>
        <begin position="546"/>
        <end position="568"/>
    </location>
</feature>
<feature type="binding site" evidence="1">
    <location>
        <position position="303"/>
    </location>
    <ligand>
        <name>[4Fe-4S] cluster</name>
        <dbReference type="ChEBI" id="CHEBI:49883"/>
        <note>4Fe-4S-S-AdoMet</note>
    </ligand>
</feature>
<feature type="binding site" evidence="1">
    <location>
        <position position="307"/>
    </location>
    <ligand>
        <name>[4Fe-4S] cluster</name>
        <dbReference type="ChEBI" id="CHEBI:49883"/>
        <note>4Fe-4S-S-AdoMet</note>
    </ligand>
</feature>
<feature type="binding site" evidence="1">
    <location>
        <position position="310"/>
    </location>
    <ligand>
        <name>[4Fe-4S] cluster</name>
        <dbReference type="ChEBI" id="CHEBI:49883"/>
        <note>4Fe-4S-S-AdoMet</note>
    </ligand>
</feature>
<proteinExistence type="inferred from homology"/>
<sequence>MKFLPTTKEEMKNLGWDSIDVLLISGDTYLDTSYNGSVLVGKWLVEHGFKVGIIAQPEVDVPDDITRLGEPNLFFAVSGGCVDSMVANYTATKKRRQQDDFTPGGVNNKRPDRAVLVYSNMIRRFFKGTTKKIVISGIESSLRRITHYDYWTNKLRKPILFDAKADILSYGMGEMSMLQLANALKNGEDWKNIKGLCYLSKEMKQDYLSLPSHSECLADKDNFIEAFHTFYLNCDPITAKGLCQKCDDRYLIQNPPSESYSEEIMDKIYSMEFARDVHPYYKKMGAVRALDTIKYSVTTHRGCYGECNFCAIAIHQGRTIMSRSQSSIVEEVKNIAGTPKFHGNISDVGGPTANMYGLECKKKLKLGACPDRRCLYPKKCLHLQVNHNNQVELLKKLKKIPNIKKIFIASGIRYDMILDDNKCGQMYLKEIIKDHISGQMKIAPEHTEDKILGLMGKDGKSCLNEFKNQFYKINNELGKKQFLTYYLIAAHPGCKDKDMMDLKRYASQELRVNPEQVQIFTPTPSTYSTLMYYTEKDPFTNQKLFVEKDNGKKQKQKDIVTEKRKNRK</sequence>
<name>Y734_FUSNN</name>
<accession>Q8R682</accession>
<keyword id="KW-0004">4Fe-4S</keyword>
<keyword id="KW-0408">Iron</keyword>
<keyword id="KW-0411">Iron-sulfur</keyword>
<keyword id="KW-0479">Metal-binding</keyword>
<keyword id="KW-1185">Reference proteome</keyword>
<keyword id="KW-0949">S-adenosyl-L-methionine</keyword>
<protein>
    <recommendedName>
        <fullName evidence="1">UPF0313 protein FN0734</fullName>
    </recommendedName>
</protein>
<gene>
    <name type="ordered locus">FN0734</name>
</gene>